<proteinExistence type="evidence at protein level"/>
<accession>Q16617</accession>
<comment type="function">
    <text evidence="1">Regulates cytotoxic granule exocytosis in effector lymphocytes, thus acting as a critical mediator of inflammation in a broad range of infectious and non-infectious diseases (By similarity). Essential for cytotoxic degranulation of natural killer (NK) cells and CD8(+) T-cells and for the activation of CD4(+) T-cells following infection (By similarity). Plays a critical role in CD8(+) T-cell and NK cell-mediated cytolysis of target cells and contributes to the cytolytic activity via the perforin/granzyme pathway by enhancing exocytosis of LAMP1-carrying lytic granules (By similarity). Contributes to NK cell-mediated control of cancer metastasis (By similarity).</text>
</comment>
<comment type="interaction">
    <interactant intactId="EBI-3919611">
        <id>Q16617</id>
    </interactant>
    <interactant intactId="EBI-741181">
        <id>Q6RW13</id>
        <label>AGTRAP</label>
    </interactant>
    <organismsDiffer>false</organismsDiffer>
    <experiments>3</experiments>
</comment>
<comment type="interaction">
    <interactant intactId="EBI-3919611">
        <id>Q16617</id>
    </interactant>
    <interactant intactId="EBI-11522760">
        <id>Q6RW13-2</id>
        <label>AGTRAP</label>
    </interactant>
    <organismsDiffer>false</organismsDiffer>
    <experiments>3</experiments>
</comment>
<comment type="interaction">
    <interactant intactId="EBI-3919611">
        <id>Q16617</id>
    </interactant>
    <interactant intactId="EBI-19125216">
        <id>Q86WK6</id>
        <label>AMIGO1</label>
    </interactant>
    <organismsDiffer>false</organismsDiffer>
    <experiments>3</experiments>
</comment>
<comment type="interaction">
    <interactant intactId="EBI-3919611">
        <id>Q16617</id>
    </interactant>
    <interactant intactId="EBI-13059134">
        <id>Q13520</id>
        <label>AQP6</label>
    </interactant>
    <organismsDiffer>false</organismsDiffer>
    <experiments>3</experiments>
</comment>
<comment type="interaction">
    <interactant intactId="EBI-3919611">
        <id>Q16617</id>
    </interactant>
    <interactant intactId="EBI-11343438">
        <id>Q3SXY8</id>
        <label>ARL13B</label>
    </interactant>
    <organismsDiffer>false</organismsDiffer>
    <experiments>3</experiments>
</comment>
<comment type="interaction">
    <interactant intactId="EBI-3919611">
        <id>Q16617</id>
    </interactant>
    <interactant intactId="EBI-2512037">
        <id>O75787</id>
        <label>ATP6AP2</label>
    </interactant>
    <organismsDiffer>false</organismsDiffer>
    <experiments>3</experiments>
</comment>
<comment type="interaction">
    <interactant intactId="EBI-3919611">
        <id>Q16617</id>
    </interactant>
    <interactant intactId="EBI-742991">
        <id>Q13145</id>
        <label>BAMBI</label>
    </interactant>
    <organismsDiffer>false</organismsDiffer>
    <experiments>3</experiments>
</comment>
<comment type="interaction">
    <interactant intactId="EBI-3919611">
        <id>Q16617</id>
    </interactant>
    <interactant intactId="EBI-6657396">
        <id>P19397</id>
        <label>CD53</label>
    </interactant>
    <organismsDiffer>false</organismsDiffer>
    <experiments>3</experiments>
</comment>
<comment type="interaction">
    <interactant intactId="EBI-3919611">
        <id>Q16617</id>
    </interactant>
    <interactant intactId="EBI-7797864">
        <id>P11912</id>
        <label>CD79A</label>
    </interactant>
    <organismsDiffer>false</organismsDiffer>
    <experiments>3</experiments>
</comment>
<comment type="interaction">
    <interactant intactId="EBI-3919611">
        <id>Q16617</id>
    </interactant>
    <interactant intactId="EBI-740744">
        <id>O95471</id>
        <label>CLDN7</label>
    </interactant>
    <organismsDiffer>false</organismsDiffer>
    <experiments>3</experiments>
</comment>
<comment type="interaction">
    <interactant intactId="EBI-3919611">
        <id>Q16617</id>
    </interactant>
    <interactant intactId="EBI-11749983">
        <id>Q9UHP7-3</id>
        <label>CLEC2D</label>
    </interactant>
    <organismsDiffer>false</organismsDiffer>
    <experiments>3</experiments>
</comment>
<comment type="interaction">
    <interactant intactId="EBI-3919611">
        <id>Q16617</id>
    </interactant>
    <interactant intactId="EBI-12807010">
        <id>Q9ULY5</id>
        <label>CLEC4E</label>
    </interactant>
    <organismsDiffer>false</organismsDiffer>
    <experiments>4</experiments>
</comment>
<comment type="interaction">
    <interactant intactId="EBI-3919611">
        <id>Q16617</id>
    </interactant>
    <interactant intactId="EBI-11291074">
        <id>Q9BQT9</id>
        <label>CLSTN3</label>
    </interactant>
    <organismsDiffer>false</organismsDiffer>
    <experiments>3</experiments>
</comment>
<comment type="interaction">
    <interactant intactId="EBI-3919611">
        <id>Q16617</id>
    </interactant>
    <interactant intactId="EBI-3915253">
        <id>Q15125</id>
        <label>EBP</label>
    </interactant>
    <organismsDiffer>false</organismsDiffer>
    <experiments>3</experiments>
</comment>
<comment type="interaction">
    <interactant intactId="EBI-3919611">
        <id>Q16617</id>
    </interactant>
    <interactant intactId="EBI-526033">
        <id>Q9HAV5</id>
        <label>EDA2R</label>
    </interactant>
    <organismsDiffer>false</organismsDiffer>
    <experiments>3</experiments>
</comment>
<comment type="interaction">
    <interactant intactId="EBI-3919611">
        <id>Q16617</id>
    </interactant>
    <interactant intactId="EBI-781551">
        <id>Q9Y282</id>
        <label>ERGIC3</label>
    </interactant>
    <organismsDiffer>false</organismsDiffer>
    <experiments>3</experiments>
</comment>
<comment type="interaction">
    <interactant intactId="EBI-3919611">
        <id>Q16617</id>
    </interactant>
    <interactant intactId="EBI-18938272">
        <id>Q96KR6</id>
        <label>FAM210B</label>
    </interactant>
    <organismsDiffer>false</organismsDiffer>
    <experiments>3</experiments>
</comment>
<comment type="interaction">
    <interactant intactId="EBI-3919611">
        <id>Q16617</id>
    </interactant>
    <interactant intactId="EBI-2833872">
        <id>O15552</id>
        <label>FFAR2</label>
    </interactant>
    <organismsDiffer>false</organismsDiffer>
    <experiments>3</experiments>
</comment>
<comment type="interaction">
    <interactant intactId="EBI-3919611">
        <id>Q16617</id>
    </interactant>
    <interactant intactId="EBI-12142257">
        <id>Q8TBE3</id>
        <label>FNDC9</label>
    </interactant>
    <organismsDiffer>false</organismsDiffer>
    <experiments>3</experiments>
</comment>
<comment type="interaction">
    <interactant intactId="EBI-3919611">
        <id>Q16617</id>
    </interactant>
    <interactant intactId="EBI-750433">
        <id>P36382</id>
        <label>GJA5</label>
    </interactant>
    <organismsDiffer>false</organismsDiffer>
    <experiments>3</experiments>
</comment>
<comment type="interaction">
    <interactant intactId="EBI-3919611">
        <id>Q16617</id>
    </interactant>
    <interactant intactId="EBI-11721746">
        <id>Q8TED1</id>
        <label>GPX8</label>
    </interactant>
    <organismsDiffer>false</organismsDiffer>
    <experiments>3</experiments>
</comment>
<comment type="interaction">
    <interactant intactId="EBI-3919611">
        <id>Q16617</id>
    </interactant>
    <interactant intactId="EBI-1266923">
        <id>Q6UXK2</id>
        <label>ISLR2</label>
    </interactant>
    <organismsDiffer>false</organismsDiffer>
    <experiments>3</experiments>
</comment>
<comment type="interaction">
    <interactant intactId="EBI-3919611">
        <id>Q16617</id>
    </interactant>
    <interactant intactId="EBI-9018187">
        <id>P26715</id>
        <label>KLRC1</label>
    </interactant>
    <organismsDiffer>false</organismsDiffer>
    <experiments>3</experiments>
</comment>
<comment type="interaction">
    <interactant intactId="EBI-3919611">
        <id>Q16617</id>
    </interactant>
    <interactant intactId="EBI-2820517">
        <id>Q8TAF8</id>
        <label>LHFPL5</label>
    </interactant>
    <organismsDiffer>false</organismsDiffer>
    <experiments>3</experiments>
</comment>
<comment type="interaction">
    <interactant intactId="EBI-3919611">
        <id>Q16617</id>
    </interactant>
    <interactant intactId="EBI-2858252">
        <id>Q6ZSS7</id>
        <label>MFSD6</label>
    </interactant>
    <organismsDiffer>false</organismsDiffer>
    <experiments>3</experiments>
</comment>
<comment type="interaction">
    <interactant intactId="EBI-3919611">
        <id>Q16617</id>
    </interactant>
    <interactant intactId="EBI-724754">
        <id>O14880</id>
        <label>MGST3</label>
    </interactant>
    <organismsDiffer>false</organismsDiffer>
    <experiments>3</experiments>
</comment>
<comment type="interaction">
    <interactant intactId="EBI-3919611">
        <id>Q16617</id>
    </interactant>
    <interactant intactId="EBI-12806656">
        <id>Q96HJ5</id>
        <label>MS4A3</label>
    </interactant>
    <organismsDiffer>false</organismsDiffer>
    <experiments>3</experiments>
</comment>
<comment type="interaction">
    <interactant intactId="EBI-3919611">
        <id>Q16617</id>
    </interactant>
    <interactant intactId="EBI-1776976">
        <id>P21757</id>
        <label>MSR1</label>
    </interactant>
    <organismsDiffer>false</organismsDiffer>
    <experiments>7</experiments>
</comment>
<comment type="interaction">
    <interactant intactId="EBI-3919611">
        <id>Q16617</id>
    </interactant>
    <interactant intactId="EBI-17263240">
        <id>P15941-11</id>
        <label>MUC1</label>
    </interactant>
    <organismsDiffer>false</organismsDiffer>
    <experiments>3</experiments>
</comment>
<comment type="interaction">
    <interactant intactId="EBI-3919611">
        <id>Q16617</id>
    </interactant>
    <interactant intactId="EBI-925028">
        <id>P41145</id>
        <label>OPRK1</label>
    </interactant>
    <organismsDiffer>false</organismsDiffer>
    <experiments>3</experiments>
</comment>
<comment type="interaction">
    <interactant intactId="EBI-3919611">
        <id>Q16617</id>
    </interactant>
    <interactant intactId="EBI-594836">
        <id>O00623</id>
        <label>PEX12</label>
    </interactant>
    <organismsDiffer>false</organismsDiffer>
    <experiments>3</experiments>
</comment>
<comment type="interaction">
    <interactant intactId="EBI-3919611">
        <id>Q16617</id>
    </interactant>
    <interactant intactId="EBI-962893">
        <id>O60894</id>
        <label>RAMP1</label>
    </interactant>
    <organismsDiffer>false</organismsDiffer>
    <experiments>3</experiments>
</comment>
<comment type="interaction">
    <interactant intactId="EBI-3919611">
        <id>Q16617</id>
    </interactant>
    <interactant intactId="EBI-13044680">
        <id>Q9Y225-2</id>
        <label>RNF24</label>
    </interactant>
    <organismsDiffer>false</organismsDiffer>
    <experiments>3</experiments>
</comment>
<comment type="interaction">
    <interactant intactId="EBI-3919611">
        <id>Q16617</id>
    </interactant>
    <interactant intactId="EBI-18036244">
        <id>Q05940</id>
        <label>SLC18A2</label>
    </interactant>
    <organismsDiffer>false</organismsDiffer>
    <experiments>3</experiments>
</comment>
<comment type="interaction">
    <interactant intactId="EBI-3919611">
        <id>Q16617</id>
    </interactant>
    <interactant intactId="EBI-10262251">
        <id>Q8IWU4</id>
        <label>SLC30A8</label>
    </interactant>
    <organismsDiffer>false</organismsDiffer>
    <experiments>3</experiments>
</comment>
<comment type="interaction">
    <interactant intactId="EBI-3919611">
        <id>Q16617</id>
    </interactant>
    <interactant intactId="EBI-1211440">
        <id>P27105</id>
        <label>STOM</label>
    </interactant>
    <organismsDiffer>false</organismsDiffer>
    <experiments>5</experiments>
</comment>
<comment type="interaction">
    <interactant intactId="EBI-3919611">
        <id>Q16617</id>
    </interactant>
    <interactant intactId="EBI-712466">
        <id>Q16623</id>
        <label>STX1A</label>
    </interactant>
    <organismsDiffer>false</organismsDiffer>
    <experiments>4</experiments>
</comment>
<comment type="interaction">
    <interactant intactId="EBI-3919611">
        <id>Q16617</id>
    </interactant>
    <interactant intactId="EBI-12947623">
        <id>Q96MV1</id>
        <label>TLCD4</label>
    </interactant>
    <organismsDiffer>false</organismsDiffer>
    <experiments>3</experiments>
</comment>
<comment type="interaction">
    <interactant intactId="EBI-3919611">
        <id>Q16617</id>
    </interactant>
    <interactant intactId="EBI-2821497">
        <id>Q9BVX2</id>
        <label>TMEM106C</label>
    </interactant>
    <organismsDiffer>false</organismsDiffer>
    <experiments>3</experiments>
</comment>
<comment type="interaction">
    <interactant intactId="EBI-3919611">
        <id>Q16617</id>
    </interactant>
    <interactant intactId="EBI-19763514">
        <id>Q8N3G9</id>
        <label>TMEM130</label>
    </interactant>
    <organismsDiffer>false</organismsDiffer>
    <experiments>3</experiments>
</comment>
<comment type="interaction">
    <interactant intactId="EBI-3919611">
        <id>Q16617</id>
    </interactant>
    <interactant intactId="EBI-7238458">
        <id>Q8IV31</id>
        <label>TMEM139</label>
    </interactant>
    <organismsDiffer>false</organismsDiffer>
    <experiments>3</experiments>
</comment>
<comment type="interaction">
    <interactant intactId="EBI-3919611">
        <id>Q16617</id>
    </interactant>
    <interactant intactId="EBI-11742770">
        <id>Q96HE8</id>
        <label>TMEM80</label>
    </interactant>
    <organismsDiffer>false</organismsDiffer>
    <experiments>3</experiments>
</comment>
<comment type="interaction">
    <interactant intactId="EBI-3919611">
        <id>Q16617</id>
    </interactant>
    <interactant intactId="EBI-17198826">
        <id>Q6PEY1</id>
        <label>TMEM88</label>
    </interactant>
    <organismsDiffer>false</organismsDiffer>
    <experiments>3</experiments>
</comment>
<comment type="subcellular location">
    <subcellularLocation>
        <location evidence="5">Cell membrane</location>
        <topology evidence="5">Multi-pass membrane protein</topology>
    </subcellularLocation>
    <subcellularLocation>
        <location evidence="5">Cytolytic granule membrane</location>
        <topology evidence="5">Multi-pass membrane protein</topology>
    </subcellularLocation>
</comment>
<comment type="tissue specificity">
    <text>Expressed in activated T-cells, in kidney, liver, lung and pancreas. Not expressed in brain, heart, or skeletal muscle. Expressed at high levels in TCR gamma delta-expressing CTL clones, and in some TCR alpha beta-expressing CTL clones (both CD4+ and CD8+), but is not expressed in other TCR alpha beta-expressing CTL clones and in cell lines representing B-cells, monocytes, and myeloid cells.</text>
</comment>
<comment type="induction">
    <text evidence="3 4">By CSF3/G-CSF (PubMed:7510105). Up-regulated in CD4(+) T-cells from peripheral blood mononuclear cells of patients with visceral leishmaniasis (PubMed:32839608).</text>
</comment>
<comment type="similarity">
    <text evidence="6">Belongs to the PMP-22/EMP/MP20 family.</text>
</comment>
<sequence>MELCRSLALLGGSLGLMFCLIALSTDFWFEAVGPTHSAHSGLWPTGHGDIISGYIHVTQTFSIMAVLWALVSVSFLVLSCFPSLFPPGHGPLVSTTAAFAAAISMVVAMAVYTSERWDQPPHPQIQTFFSWSFYLGWVSAILLLCTGALSLGAHCGGPRPGYETL</sequence>
<evidence type="ECO:0000250" key="1">
    <source>
        <dbReference type="UniProtKB" id="Q99PA5"/>
    </source>
</evidence>
<evidence type="ECO:0000255" key="2"/>
<evidence type="ECO:0000269" key="3">
    <source>
    </source>
</evidence>
<evidence type="ECO:0000269" key="4">
    <source>
    </source>
</evidence>
<evidence type="ECO:0000269" key="5">
    <source>
    </source>
</evidence>
<evidence type="ECO:0000305" key="6"/>
<gene>
    <name type="primary">NKG7</name>
    <name type="synonym">GIG1</name>
</gene>
<feature type="chain" id="PRO_0000164667" description="Protein NKG7">
    <location>
        <begin position="1"/>
        <end position="165"/>
    </location>
</feature>
<feature type="transmembrane region" description="Helical" evidence="2">
    <location>
        <begin position="9"/>
        <end position="29"/>
    </location>
</feature>
<feature type="transmembrane region" description="Helical" evidence="2">
    <location>
        <begin position="61"/>
        <end position="81"/>
    </location>
</feature>
<feature type="transmembrane region" description="Helical" evidence="2">
    <location>
        <begin position="92"/>
        <end position="112"/>
    </location>
</feature>
<feature type="transmembrane region" description="Helical" evidence="2">
    <location>
        <begin position="133"/>
        <end position="153"/>
    </location>
</feature>
<keyword id="KW-1003">Cell membrane</keyword>
<keyword id="KW-0204">Cytolysis</keyword>
<keyword id="KW-0903">Direct protein sequencing</keyword>
<keyword id="KW-0395">Inflammatory response</keyword>
<keyword id="KW-0458">Lysosome</keyword>
<keyword id="KW-0472">Membrane</keyword>
<keyword id="KW-1267">Proteomics identification</keyword>
<keyword id="KW-1185">Reference proteome</keyword>
<keyword id="KW-0812">Transmembrane</keyword>
<keyword id="KW-1133">Transmembrane helix</keyword>
<name>NKG7_HUMAN</name>
<organism>
    <name type="scientific">Homo sapiens</name>
    <name type="common">Human</name>
    <dbReference type="NCBI Taxonomy" id="9606"/>
    <lineage>
        <taxon>Eukaryota</taxon>
        <taxon>Metazoa</taxon>
        <taxon>Chordata</taxon>
        <taxon>Craniata</taxon>
        <taxon>Vertebrata</taxon>
        <taxon>Euteleostomi</taxon>
        <taxon>Mammalia</taxon>
        <taxon>Eutheria</taxon>
        <taxon>Euarchontoglires</taxon>
        <taxon>Primates</taxon>
        <taxon>Haplorrhini</taxon>
        <taxon>Catarrhini</taxon>
        <taxon>Hominidae</taxon>
        <taxon>Homo</taxon>
    </lineage>
</organism>
<reference key="1">
    <citation type="journal article" date="1993" name="Hum. Immunol.">
        <title>Characterization of a novel gene (NKG7) on human chromosome 19 that is expressed in natural killer cells and T cells.</title>
        <authorList>
            <person name="Turman M.A."/>
            <person name="Yabe T."/>
            <person name="McSherry C."/>
            <person name="Bach F.H."/>
            <person name="Houchins J.P."/>
        </authorList>
    </citation>
    <scope>NUCLEOTIDE SEQUENCE [MRNA]</scope>
</reference>
<reference key="2">
    <citation type="journal article" date="1994" name="Biochem. Biophys. Res. Commun.">
        <title>Molecular cloning and characterization of G-CSF induced gene cDNA.</title>
        <authorList>
            <person name="Shimane M."/>
            <person name="Tani K."/>
            <person name="Maruyama K."/>
            <person name="Takahashi S."/>
            <person name="Ozawa K."/>
            <person name="Asano S."/>
        </authorList>
    </citation>
    <scope>NUCLEOTIDE SEQUENCE [MRNA]</scope>
    <scope>INDUCTION</scope>
</reference>
<reference key="3">
    <citation type="submission" date="2000-09" db="EMBL/GenBank/DDBJ databases">
        <title>Human chromosome 19q13.4 DNA sequence, including complete sequence for LIM2 and NKG7.</title>
        <authorList>
            <person name="Church R.L."/>
            <person name="Li X.L."/>
            <person name="Wang J.H."/>
        </authorList>
    </citation>
    <scope>NUCLEOTIDE SEQUENCE [GENOMIC DNA]</scope>
</reference>
<reference key="4">
    <citation type="journal article" date="2004" name="Genome Res.">
        <title>The status, quality, and expansion of the NIH full-length cDNA project: the Mammalian Gene Collection (MGC).</title>
        <authorList>
            <consortium name="The MGC Project Team"/>
        </authorList>
    </citation>
    <scope>NUCLEOTIDE SEQUENCE [LARGE SCALE MRNA]</scope>
    <source>
        <tissue>Blood</tissue>
    </source>
</reference>
<reference key="5">
    <citation type="journal article" date="1996" name="Proc. Natl. Acad. Sci. U.S.A.">
        <title>Characterization of GMP-17, a granule membrane protein that moves to the plasma membrane of natural killer cells following target cell recognition.</title>
        <authorList>
            <person name="Medley Q.G."/>
            <person name="Kedersha N."/>
            <person name="O'Brien S."/>
            <person name="Tian Q."/>
            <person name="Schlossman S.F."/>
            <person name="Streuli M."/>
            <person name="Anderson P."/>
        </authorList>
    </citation>
    <scope>PROTEIN SEQUENCE OF 1-25</scope>
    <scope>SUBCELLULAR LOCATION</scope>
</reference>
<reference key="6">
    <citation type="journal article" date="2020" name="Nat. Immunol.">
        <title>The NK cell granule protein NKG7 regulates cytotoxic granule exocytosis and inflammation.</title>
        <authorList>
            <person name="Ng S.S."/>
            <person name="De Labastida Rivera F."/>
            <person name="Yan J."/>
            <person name="Corvino D."/>
            <person name="Das I."/>
            <person name="Zhang P."/>
            <person name="Kuns R."/>
            <person name="Chauhan S.B."/>
            <person name="Hou J."/>
            <person name="Li X.Y."/>
            <person name="Frame T.C.M."/>
            <person name="McEnroe B.A."/>
            <person name="Moore E."/>
            <person name="Na J."/>
            <person name="Engel J.A."/>
            <person name="Soon M.S.F."/>
            <person name="Singh B."/>
            <person name="Kueh A.J."/>
            <person name="Herold M.J."/>
            <person name="Montes de Oca M."/>
            <person name="Singh S.S."/>
            <person name="Bunn P.T."/>
            <person name="Aguilera A.R."/>
            <person name="Casey M."/>
            <person name="Braun M."/>
            <person name="Ghazanfari N."/>
            <person name="Wani S."/>
            <person name="Wang Y."/>
            <person name="Amante F.H."/>
            <person name="Edwards C.L."/>
            <person name="Haque A."/>
            <person name="Dougall W.C."/>
            <person name="Singh O.P."/>
            <person name="Baxter A.G."/>
            <person name="Teng M.W.L."/>
            <person name="Loukas A."/>
            <person name="Daly N.L."/>
            <person name="Cloonan N."/>
            <person name="Degli-Esposti M.A."/>
            <person name="Uzonna J."/>
            <person name="Heath W.R."/>
            <person name="Bald T."/>
            <person name="Tey S.K."/>
            <person name="Nakamura K."/>
            <person name="Hill G.R."/>
            <person name="Kumar R."/>
            <person name="Sundar S."/>
            <person name="Smyth M.J."/>
            <person name="Engwerda C.R."/>
        </authorList>
    </citation>
    <scope>INDUCTION</scope>
</reference>
<protein>
    <recommendedName>
        <fullName>Protein NKG7</fullName>
    </recommendedName>
    <alternativeName>
        <fullName>G-CSF-induced gene 1 protein</fullName>
        <shortName>GIG-1 protein</shortName>
    </alternativeName>
    <alternativeName>
        <fullName>Granule membrane protein of 17 kDa</fullName>
        <shortName>GMP-17</shortName>
    </alternativeName>
    <alternativeName>
        <fullName>Natural killer cell protein 7</fullName>
    </alternativeName>
    <alternativeName>
        <fullName>p15-TIA-1</fullName>
    </alternativeName>
</protein>
<dbReference type="EMBL" id="U09608">
    <property type="protein sequence ID" value="AAA18209.1"/>
    <property type="molecule type" value="mRNA"/>
</dbReference>
<dbReference type="EMBL" id="S69115">
    <property type="protein sequence ID" value="AAB30078.1"/>
    <property type="molecule type" value="mRNA"/>
</dbReference>
<dbReference type="EMBL" id="AF305941">
    <property type="protein sequence ID" value="AAG32329.1"/>
    <property type="molecule type" value="Genomic_DNA"/>
</dbReference>
<dbReference type="EMBL" id="BC015759">
    <property type="protein sequence ID" value="AAH15759.1"/>
    <property type="molecule type" value="mRNA"/>
</dbReference>
<dbReference type="CCDS" id="CCDS12830.1"/>
<dbReference type="PIR" id="JC2081">
    <property type="entry name" value="JC2081"/>
</dbReference>
<dbReference type="RefSeq" id="NP_005592.1">
    <property type="nucleotide sequence ID" value="NM_005601.4"/>
</dbReference>
<dbReference type="SMR" id="Q16617"/>
<dbReference type="BioGRID" id="110883">
    <property type="interactions" value="50"/>
</dbReference>
<dbReference type="FunCoup" id="Q16617">
    <property type="interactions" value="63"/>
</dbReference>
<dbReference type="IntAct" id="Q16617">
    <property type="interactions" value="45"/>
</dbReference>
<dbReference type="STRING" id="9606.ENSP00000221978"/>
<dbReference type="GlyGen" id="Q16617">
    <property type="glycosylation" value="1 site"/>
</dbReference>
<dbReference type="iPTMnet" id="Q16617"/>
<dbReference type="PhosphoSitePlus" id="Q16617"/>
<dbReference type="BioMuta" id="NKG7"/>
<dbReference type="DMDM" id="3914144"/>
<dbReference type="MassIVE" id="Q16617"/>
<dbReference type="PaxDb" id="9606-ENSP00000221978"/>
<dbReference type="PeptideAtlas" id="Q16617"/>
<dbReference type="Antibodypedia" id="76657">
    <property type="antibodies" value="32 antibodies from 10 providers"/>
</dbReference>
<dbReference type="DNASU" id="4818"/>
<dbReference type="Ensembl" id="ENST00000221978.10">
    <property type="protein sequence ID" value="ENSP00000221978.4"/>
    <property type="gene ID" value="ENSG00000105374.10"/>
</dbReference>
<dbReference type="GeneID" id="4818"/>
<dbReference type="KEGG" id="hsa:4818"/>
<dbReference type="MANE-Select" id="ENST00000221978.10">
    <property type="protein sequence ID" value="ENSP00000221978.4"/>
    <property type="RefSeq nucleotide sequence ID" value="NM_005601.4"/>
    <property type="RefSeq protein sequence ID" value="NP_005592.1"/>
</dbReference>
<dbReference type="UCSC" id="uc002pwj.4">
    <property type="organism name" value="human"/>
</dbReference>
<dbReference type="AGR" id="HGNC:7830"/>
<dbReference type="CTD" id="4818"/>
<dbReference type="DisGeNET" id="4818"/>
<dbReference type="GeneCards" id="NKG7"/>
<dbReference type="HGNC" id="HGNC:7830">
    <property type="gene designation" value="NKG7"/>
</dbReference>
<dbReference type="HPA" id="ENSG00000105374">
    <property type="expression patterns" value="Group enriched (bone marrow, lymphoid tissue)"/>
</dbReference>
<dbReference type="MIM" id="606008">
    <property type="type" value="gene"/>
</dbReference>
<dbReference type="neXtProt" id="NX_Q16617"/>
<dbReference type="OpenTargets" id="ENSG00000105374"/>
<dbReference type="PharmGKB" id="PA31639"/>
<dbReference type="VEuPathDB" id="HostDB:ENSG00000105374"/>
<dbReference type="eggNOG" id="ENOG502SUH4">
    <property type="taxonomic scope" value="Eukaryota"/>
</dbReference>
<dbReference type="GeneTree" id="ENSGT01050000244814"/>
<dbReference type="HOGENOM" id="CLU_133330_0_0_1"/>
<dbReference type="InParanoid" id="Q16617"/>
<dbReference type="OMA" id="YIHVTQT"/>
<dbReference type="OrthoDB" id="9427654at2759"/>
<dbReference type="PAN-GO" id="Q16617">
    <property type="GO annotations" value="1 GO annotation based on evolutionary models"/>
</dbReference>
<dbReference type="PhylomeDB" id="Q16617"/>
<dbReference type="TreeFam" id="TF330587"/>
<dbReference type="PathwayCommons" id="Q16617"/>
<dbReference type="SignaLink" id="Q16617"/>
<dbReference type="BioGRID-ORCS" id="4818">
    <property type="hits" value="6 hits in 1145 CRISPR screens"/>
</dbReference>
<dbReference type="GenomeRNAi" id="4818"/>
<dbReference type="Pharos" id="Q16617">
    <property type="development level" value="Tdark"/>
</dbReference>
<dbReference type="PRO" id="PR:Q16617"/>
<dbReference type="Proteomes" id="UP000005640">
    <property type="component" value="Chromosome 19"/>
</dbReference>
<dbReference type="RNAct" id="Q16617">
    <property type="molecule type" value="protein"/>
</dbReference>
<dbReference type="Bgee" id="ENSG00000105374">
    <property type="expression patterns" value="Expressed in granulocyte and 103 other cell types or tissues"/>
</dbReference>
<dbReference type="ExpressionAtlas" id="Q16617">
    <property type="expression patterns" value="baseline and differential"/>
</dbReference>
<dbReference type="GO" id="GO:0044194">
    <property type="term" value="C:cytolytic granule"/>
    <property type="evidence" value="ECO:0000250"/>
    <property type="project" value="UniProtKB"/>
</dbReference>
<dbReference type="GO" id="GO:0101004">
    <property type="term" value="C:cytolytic granule membrane"/>
    <property type="evidence" value="ECO:0000314"/>
    <property type="project" value="UniProtKB"/>
</dbReference>
<dbReference type="GO" id="GO:0005886">
    <property type="term" value="C:plasma membrane"/>
    <property type="evidence" value="ECO:0000314"/>
    <property type="project" value="UniProtKB"/>
</dbReference>
<dbReference type="GO" id="GO:0035710">
    <property type="term" value="P:CD4-positive, alpha-beta T cell activation"/>
    <property type="evidence" value="ECO:0000250"/>
    <property type="project" value="UniProtKB"/>
</dbReference>
<dbReference type="GO" id="GO:0042832">
    <property type="term" value="P:defense response to protozoan"/>
    <property type="evidence" value="ECO:0000314"/>
    <property type="project" value="UniProtKB"/>
</dbReference>
<dbReference type="GO" id="GO:0140507">
    <property type="term" value="P:granzyme-mediated programmed cell death signaling pathway"/>
    <property type="evidence" value="ECO:0000250"/>
    <property type="project" value="UniProtKB"/>
</dbReference>
<dbReference type="GO" id="GO:0006954">
    <property type="term" value="P:inflammatory response"/>
    <property type="evidence" value="ECO:0007669"/>
    <property type="project" value="UniProtKB-KW"/>
</dbReference>
<dbReference type="GO" id="GO:0031640">
    <property type="term" value="P:killing of cells of another organism"/>
    <property type="evidence" value="ECO:0007669"/>
    <property type="project" value="UniProtKB-KW"/>
</dbReference>
<dbReference type="GO" id="GO:0043320">
    <property type="term" value="P:natural killer cell degranulation"/>
    <property type="evidence" value="ECO:0000250"/>
    <property type="project" value="UniProtKB"/>
</dbReference>
<dbReference type="GO" id="GO:0042267">
    <property type="term" value="P:natural killer cell mediated cytotoxicity"/>
    <property type="evidence" value="ECO:0000250"/>
    <property type="project" value="UniProtKB"/>
</dbReference>
<dbReference type="GO" id="GO:0002420">
    <property type="term" value="P:natural killer cell mediated cytotoxicity directed against tumor cell target"/>
    <property type="evidence" value="ECO:0000250"/>
    <property type="project" value="UniProtKB"/>
</dbReference>
<dbReference type="GO" id="GO:0050729">
    <property type="term" value="P:positive regulation of inflammatory response"/>
    <property type="evidence" value="ECO:0000250"/>
    <property type="project" value="UniProtKB"/>
</dbReference>
<dbReference type="FunFam" id="1.20.140.150:FF:000033">
    <property type="entry name" value="Natural killer cell granule protein 7"/>
    <property type="match status" value="1"/>
</dbReference>
<dbReference type="Gene3D" id="1.20.140.150">
    <property type="match status" value="1"/>
</dbReference>
<dbReference type="InterPro" id="IPR050579">
    <property type="entry name" value="PMP-22/EMP/MP20-like"/>
</dbReference>
<dbReference type="InterPro" id="IPR004031">
    <property type="entry name" value="PMP22/EMP/MP20/Claudin"/>
</dbReference>
<dbReference type="InterPro" id="IPR004032">
    <property type="entry name" value="PMP22_EMP_MP20"/>
</dbReference>
<dbReference type="PANTHER" id="PTHR10671">
    <property type="entry name" value="EPITHELIAL MEMBRANE PROTEIN-RELATED"/>
    <property type="match status" value="1"/>
</dbReference>
<dbReference type="PANTHER" id="PTHR10671:SF34">
    <property type="entry name" value="PROTEIN NKG7"/>
    <property type="match status" value="1"/>
</dbReference>
<dbReference type="Pfam" id="PF00822">
    <property type="entry name" value="PMP22_Claudin"/>
    <property type="match status" value="1"/>
</dbReference>
<dbReference type="PROSITE" id="PS01221">
    <property type="entry name" value="PMP22_1"/>
    <property type="match status" value="1"/>
</dbReference>